<keyword id="KW-0328">Glycosyltransferase</keyword>
<keyword id="KW-0479">Metal-binding</keyword>
<keyword id="KW-0671">Queuosine biosynthesis</keyword>
<keyword id="KW-1185">Reference proteome</keyword>
<keyword id="KW-0808">Transferase</keyword>
<keyword id="KW-0819">tRNA processing</keyword>
<keyword id="KW-0862">Zinc</keyword>
<name>TGT_LACPL</name>
<proteinExistence type="inferred from homology"/>
<evidence type="ECO:0000255" key="1">
    <source>
        <dbReference type="HAMAP-Rule" id="MF_00168"/>
    </source>
</evidence>
<comment type="function">
    <text evidence="1">Catalyzes the base-exchange of a guanine (G) residue with the queuine precursor 7-aminomethyl-7-deazaguanine (PreQ1) at position 34 (anticodon wobble position) in tRNAs with GU(N) anticodons (tRNA-Asp, -Asn, -His and -Tyr). Catalysis occurs through a double-displacement mechanism. The nucleophile active site attacks the C1' of nucleotide 34 to detach the guanine base from the RNA, forming a covalent enzyme-RNA intermediate. The proton acceptor active site deprotonates the incoming PreQ1, allowing a nucleophilic attack on the C1' of the ribose to form the product. After dissociation, two additional enzymatic reactions on the tRNA convert PreQ1 to queuine (Q), resulting in the hypermodified nucleoside queuosine (7-(((4,5-cis-dihydroxy-2-cyclopenten-1-yl)amino)methyl)-7-deazaguanosine).</text>
</comment>
<comment type="catalytic activity">
    <reaction evidence="1">
        <text>7-aminomethyl-7-carbaguanine + guanosine(34) in tRNA = 7-aminomethyl-7-carbaguanosine(34) in tRNA + guanine</text>
        <dbReference type="Rhea" id="RHEA:24104"/>
        <dbReference type="Rhea" id="RHEA-COMP:10341"/>
        <dbReference type="Rhea" id="RHEA-COMP:10342"/>
        <dbReference type="ChEBI" id="CHEBI:16235"/>
        <dbReference type="ChEBI" id="CHEBI:58703"/>
        <dbReference type="ChEBI" id="CHEBI:74269"/>
        <dbReference type="ChEBI" id="CHEBI:82833"/>
        <dbReference type="EC" id="2.4.2.29"/>
    </reaction>
</comment>
<comment type="cofactor">
    <cofactor evidence="1">
        <name>Zn(2+)</name>
        <dbReference type="ChEBI" id="CHEBI:29105"/>
    </cofactor>
    <text evidence="1">Binds 1 zinc ion per subunit.</text>
</comment>
<comment type="pathway">
    <text evidence="1">tRNA modification; tRNA-queuosine biosynthesis.</text>
</comment>
<comment type="subunit">
    <text evidence="1">Homodimer. Within each dimer, one monomer is responsible for RNA recognition and catalysis, while the other monomer binds to the replacement base PreQ1.</text>
</comment>
<comment type="similarity">
    <text evidence="1">Belongs to the queuine tRNA-ribosyltransferase family.</text>
</comment>
<dbReference type="EC" id="2.4.2.29" evidence="1"/>
<dbReference type="EMBL" id="AL935263">
    <property type="protein sequence ID" value="CCC79490.1"/>
    <property type="molecule type" value="Genomic_DNA"/>
</dbReference>
<dbReference type="RefSeq" id="WP_003641516.1">
    <property type="nucleotide sequence ID" value="NC_004567.2"/>
</dbReference>
<dbReference type="RefSeq" id="YP_004890004.1">
    <property type="nucleotide sequence ID" value="NC_004567.2"/>
</dbReference>
<dbReference type="SMR" id="Q88V05"/>
<dbReference type="STRING" id="220668.lp_2282"/>
<dbReference type="EnsemblBacteria" id="CCC79490">
    <property type="protein sequence ID" value="CCC79490"/>
    <property type="gene ID" value="lp_2282"/>
</dbReference>
<dbReference type="GeneID" id="77215672"/>
<dbReference type="KEGG" id="lpl:lp_2282"/>
<dbReference type="PATRIC" id="fig|220668.9.peg.1932"/>
<dbReference type="eggNOG" id="COG0343">
    <property type="taxonomic scope" value="Bacteria"/>
</dbReference>
<dbReference type="HOGENOM" id="CLU_022060_0_1_9"/>
<dbReference type="OrthoDB" id="9805417at2"/>
<dbReference type="PhylomeDB" id="Q88V05"/>
<dbReference type="UniPathway" id="UPA00392"/>
<dbReference type="Proteomes" id="UP000000432">
    <property type="component" value="Chromosome"/>
</dbReference>
<dbReference type="GO" id="GO:0005829">
    <property type="term" value="C:cytosol"/>
    <property type="evidence" value="ECO:0007669"/>
    <property type="project" value="TreeGrafter"/>
</dbReference>
<dbReference type="GO" id="GO:0046872">
    <property type="term" value="F:metal ion binding"/>
    <property type="evidence" value="ECO:0007669"/>
    <property type="project" value="UniProtKB-KW"/>
</dbReference>
<dbReference type="GO" id="GO:0008479">
    <property type="term" value="F:tRNA-guanosine(34) queuine transglycosylase activity"/>
    <property type="evidence" value="ECO:0007669"/>
    <property type="project" value="UniProtKB-UniRule"/>
</dbReference>
<dbReference type="GO" id="GO:0008616">
    <property type="term" value="P:queuosine biosynthetic process"/>
    <property type="evidence" value="ECO:0007669"/>
    <property type="project" value="UniProtKB-UniRule"/>
</dbReference>
<dbReference type="GO" id="GO:0002099">
    <property type="term" value="P:tRNA wobble guanine modification"/>
    <property type="evidence" value="ECO:0007669"/>
    <property type="project" value="TreeGrafter"/>
</dbReference>
<dbReference type="GO" id="GO:0101030">
    <property type="term" value="P:tRNA-guanine transglycosylation"/>
    <property type="evidence" value="ECO:0007669"/>
    <property type="project" value="InterPro"/>
</dbReference>
<dbReference type="FunFam" id="3.20.20.105:FF:000001">
    <property type="entry name" value="Queuine tRNA-ribosyltransferase"/>
    <property type="match status" value="1"/>
</dbReference>
<dbReference type="Gene3D" id="3.20.20.105">
    <property type="entry name" value="Queuine tRNA-ribosyltransferase-like"/>
    <property type="match status" value="1"/>
</dbReference>
<dbReference type="HAMAP" id="MF_00168">
    <property type="entry name" value="Q_tRNA_Tgt"/>
    <property type="match status" value="1"/>
</dbReference>
<dbReference type="InterPro" id="IPR050076">
    <property type="entry name" value="ArchSynthase1/Queuine_TRR"/>
</dbReference>
<dbReference type="InterPro" id="IPR004803">
    <property type="entry name" value="TGT"/>
</dbReference>
<dbReference type="InterPro" id="IPR036511">
    <property type="entry name" value="TGT-like_sf"/>
</dbReference>
<dbReference type="InterPro" id="IPR002616">
    <property type="entry name" value="tRNA_ribo_trans-like"/>
</dbReference>
<dbReference type="NCBIfam" id="TIGR00430">
    <property type="entry name" value="Q_tRNA_tgt"/>
    <property type="match status" value="1"/>
</dbReference>
<dbReference type="NCBIfam" id="TIGR00449">
    <property type="entry name" value="tgt_general"/>
    <property type="match status" value="1"/>
</dbReference>
<dbReference type="PANTHER" id="PTHR46499">
    <property type="entry name" value="QUEUINE TRNA-RIBOSYLTRANSFERASE"/>
    <property type="match status" value="1"/>
</dbReference>
<dbReference type="PANTHER" id="PTHR46499:SF1">
    <property type="entry name" value="QUEUINE TRNA-RIBOSYLTRANSFERASE"/>
    <property type="match status" value="1"/>
</dbReference>
<dbReference type="Pfam" id="PF01702">
    <property type="entry name" value="TGT"/>
    <property type="match status" value="1"/>
</dbReference>
<dbReference type="SUPFAM" id="SSF51713">
    <property type="entry name" value="tRNA-guanine transglycosylase"/>
    <property type="match status" value="1"/>
</dbReference>
<accession>Q88V05</accession>
<accession>F9UQK1</accession>
<sequence length="380" mass="42830">MEPAIKYRLIKKEKHTGARLGELITPHGTFPTPMFMPVGTQASVKSLAPEELDAMGAGVILSNTYHLWLRPGEQIVKEAGGLHQFMNWKKGILTDSGGFQVFSLAKNRDITEEGVHFKNHLNGSKMFLSPEKAIQIENDLGPDIMMSLDECPPFFESYDYVSKSVARTSRWAERGLKVHQHPDYQGLFGIVQGAGFKDLREQSAKDLVSLDFPGYSIGGLSVGESKAEMNHVLDFTTPLLPENKPRYLMGVGSADALIDGAIRGVDMFDCVLPTRIARNGTCMTSHGRLVVKNAAYAHDFTPLDDNCDCYTCRNFTRAYIRHLIKADETFGLRLTSYHNLYFLLHLMKQVRQAIMDDNLLEFRQNFFEMYGFNDKNPKNF</sequence>
<organism>
    <name type="scientific">Lactiplantibacillus plantarum (strain ATCC BAA-793 / NCIMB 8826 / WCFS1)</name>
    <name type="common">Lactobacillus plantarum</name>
    <dbReference type="NCBI Taxonomy" id="220668"/>
    <lineage>
        <taxon>Bacteria</taxon>
        <taxon>Bacillati</taxon>
        <taxon>Bacillota</taxon>
        <taxon>Bacilli</taxon>
        <taxon>Lactobacillales</taxon>
        <taxon>Lactobacillaceae</taxon>
        <taxon>Lactiplantibacillus</taxon>
    </lineage>
</organism>
<reference key="1">
    <citation type="journal article" date="2003" name="Proc. Natl. Acad. Sci. U.S.A.">
        <title>Complete genome sequence of Lactobacillus plantarum WCFS1.</title>
        <authorList>
            <person name="Kleerebezem M."/>
            <person name="Boekhorst J."/>
            <person name="van Kranenburg R."/>
            <person name="Molenaar D."/>
            <person name="Kuipers O.P."/>
            <person name="Leer R."/>
            <person name="Tarchini R."/>
            <person name="Peters S.A."/>
            <person name="Sandbrink H.M."/>
            <person name="Fiers M.W.E.J."/>
            <person name="Stiekema W."/>
            <person name="Klein Lankhorst R.M."/>
            <person name="Bron P.A."/>
            <person name="Hoffer S.M."/>
            <person name="Nierop Groot M.N."/>
            <person name="Kerkhoven R."/>
            <person name="De Vries M."/>
            <person name="Ursing B."/>
            <person name="De Vos W.M."/>
            <person name="Siezen R.J."/>
        </authorList>
    </citation>
    <scope>NUCLEOTIDE SEQUENCE [LARGE SCALE GENOMIC DNA]</scope>
    <source>
        <strain>ATCC BAA-793 / NCIMB 8826 / WCFS1</strain>
    </source>
</reference>
<reference key="2">
    <citation type="journal article" date="2012" name="J. Bacteriol.">
        <title>Complete resequencing and reannotation of the Lactobacillus plantarum WCFS1 genome.</title>
        <authorList>
            <person name="Siezen R.J."/>
            <person name="Francke C."/>
            <person name="Renckens B."/>
            <person name="Boekhorst J."/>
            <person name="Wels M."/>
            <person name="Kleerebezem M."/>
            <person name="van Hijum S.A."/>
        </authorList>
    </citation>
    <scope>NUCLEOTIDE SEQUENCE [LARGE SCALE GENOMIC DNA]</scope>
    <scope>GENOME REANNOTATION</scope>
    <source>
        <strain>ATCC BAA-793 / NCIMB 8826 / WCFS1</strain>
    </source>
</reference>
<gene>
    <name evidence="1" type="primary">tgt</name>
    <name type="ordered locus">lp_2282</name>
</gene>
<feature type="chain" id="PRO_0000135487" description="Queuine tRNA-ribosyltransferase">
    <location>
        <begin position="1"/>
        <end position="380"/>
    </location>
</feature>
<feature type="region of interest" description="RNA binding" evidence="1">
    <location>
        <begin position="250"/>
        <end position="256"/>
    </location>
</feature>
<feature type="region of interest" description="RNA binding; important for wobble base 34 recognition" evidence="1">
    <location>
        <begin position="274"/>
        <end position="278"/>
    </location>
</feature>
<feature type="active site" description="Proton acceptor" evidence="1">
    <location>
        <position position="95"/>
    </location>
</feature>
<feature type="active site" description="Nucleophile" evidence="1">
    <location>
        <position position="269"/>
    </location>
</feature>
<feature type="binding site" evidence="1">
    <location>
        <begin position="95"/>
        <end position="99"/>
    </location>
    <ligand>
        <name>substrate</name>
    </ligand>
</feature>
<feature type="binding site" evidence="1">
    <location>
        <position position="149"/>
    </location>
    <ligand>
        <name>substrate</name>
    </ligand>
</feature>
<feature type="binding site" evidence="1">
    <location>
        <position position="192"/>
    </location>
    <ligand>
        <name>substrate</name>
    </ligand>
</feature>
<feature type="binding site" evidence="1">
    <location>
        <position position="219"/>
    </location>
    <ligand>
        <name>substrate</name>
    </ligand>
</feature>
<feature type="binding site" evidence="1">
    <location>
        <position position="307"/>
    </location>
    <ligand>
        <name>Zn(2+)</name>
        <dbReference type="ChEBI" id="CHEBI:29105"/>
    </ligand>
</feature>
<feature type="binding site" evidence="1">
    <location>
        <position position="309"/>
    </location>
    <ligand>
        <name>Zn(2+)</name>
        <dbReference type="ChEBI" id="CHEBI:29105"/>
    </ligand>
</feature>
<feature type="binding site" evidence="1">
    <location>
        <position position="312"/>
    </location>
    <ligand>
        <name>Zn(2+)</name>
        <dbReference type="ChEBI" id="CHEBI:29105"/>
    </ligand>
</feature>
<feature type="binding site" evidence="1">
    <location>
        <position position="338"/>
    </location>
    <ligand>
        <name>Zn(2+)</name>
        <dbReference type="ChEBI" id="CHEBI:29105"/>
    </ligand>
</feature>
<protein>
    <recommendedName>
        <fullName evidence="1">Queuine tRNA-ribosyltransferase</fullName>
        <ecNumber evidence="1">2.4.2.29</ecNumber>
    </recommendedName>
    <alternativeName>
        <fullName evidence="1">Guanine insertion enzyme</fullName>
    </alternativeName>
    <alternativeName>
        <fullName evidence="1">tRNA-guanine transglycosylase</fullName>
    </alternativeName>
</protein>